<organism>
    <name type="scientific">Tityus discrepans</name>
    <name type="common">Venezuelan scorpion</name>
    <dbReference type="NCBI Taxonomy" id="57059"/>
    <lineage>
        <taxon>Eukaryota</taxon>
        <taxon>Metazoa</taxon>
        <taxon>Ecdysozoa</taxon>
        <taxon>Arthropoda</taxon>
        <taxon>Chelicerata</taxon>
        <taxon>Arachnida</taxon>
        <taxon>Scorpiones</taxon>
        <taxon>Buthida</taxon>
        <taxon>Buthoidea</taxon>
        <taxon>Buthidae</taxon>
        <taxon>Tityus</taxon>
    </lineage>
</organism>
<proteinExistence type="evidence at protein level"/>
<sequence>KDGYLMGADGCKLCVLTAPYDYCACE</sequence>
<evidence type="ECO:0000250" key="1"/>
<evidence type="ECO:0000305" key="2"/>
<dbReference type="GO" id="GO:0005576">
    <property type="term" value="C:extracellular region"/>
    <property type="evidence" value="ECO:0007669"/>
    <property type="project" value="UniProtKB-SubCell"/>
</dbReference>
<dbReference type="GO" id="GO:0017080">
    <property type="term" value="F:sodium channel regulator activity"/>
    <property type="evidence" value="ECO:0007669"/>
    <property type="project" value="UniProtKB-KW"/>
</dbReference>
<dbReference type="GO" id="GO:0090729">
    <property type="term" value="F:toxin activity"/>
    <property type="evidence" value="ECO:0007669"/>
    <property type="project" value="UniProtKB-KW"/>
</dbReference>
<reference key="1">
    <citation type="journal article" date="1996" name="Toxicon">
        <title>High performance liquid chromatography purification and amino acid sequence of toxins from the muscarinic fraction of Tityus discrepans scorpion venom.</title>
        <authorList>
            <person name="D'Suze G."/>
            <person name="Corona F."/>
            <person name="Possani L.D."/>
            <person name="Sevcik C."/>
        </authorList>
    </citation>
    <scope>PROTEIN SEQUENCE</scope>
    <source>
        <tissue>Venom</tissue>
    </source>
</reference>
<name>SCX21_TITDI</name>
<comment type="function">
    <text evidence="1">Beta toxins bind voltage-independently at site-4 of sodium channels (Nav) and shift the voltage of activation toward more negative potentials thereby affecting sodium channel activation and promoting spontaneous and repetitive firing (By similarity). This toxin is active against mammals and crustaceans.</text>
</comment>
<comment type="subcellular location">
    <subcellularLocation>
        <location>Secreted</location>
    </subcellularLocation>
</comment>
<comment type="tissue specificity">
    <text>Expressed by the venom gland.</text>
</comment>
<comment type="similarity">
    <text evidence="2">Belongs to the long (4 C-C) scorpion toxin superfamily. Sodium channel inhibitor family. Beta subfamily.</text>
</comment>
<keyword id="KW-0903">Direct protein sequencing</keyword>
<keyword id="KW-0872">Ion channel impairing toxin</keyword>
<keyword id="KW-0528">Neurotoxin</keyword>
<keyword id="KW-0964">Secreted</keyword>
<keyword id="KW-0800">Toxin</keyword>
<keyword id="KW-0738">Voltage-gated sodium channel impairing toxin</keyword>
<feature type="chain" id="PRO_0000066820" description="Toxin TdII-1">
    <location>
        <begin position="1"/>
        <end position="26" status="greater than"/>
    </location>
</feature>
<feature type="non-terminal residue">
    <location>
        <position position="26"/>
    </location>
</feature>
<protein>
    <recommendedName>
        <fullName>Toxin TdII-1</fullName>
    </recommendedName>
</protein>
<accession>P60260</accession>